<evidence type="ECO:0000255" key="1">
    <source>
        <dbReference type="HAMAP-Rule" id="MF_00412"/>
    </source>
</evidence>
<comment type="function">
    <text evidence="1">Catalyzes the NADPH-dependent reduction of L-glutamate 5-phosphate into L-glutamate 5-semialdehyde and phosphate. The product spontaneously undergoes cyclization to form 1-pyrroline-5-carboxylate.</text>
</comment>
<comment type="catalytic activity">
    <reaction evidence="1">
        <text>L-glutamate 5-semialdehyde + phosphate + NADP(+) = L-glutamyl 5-phosphate + NADPH + H(+)</text>
        <dbReference type="Rhea" id="RHEA:19541"/>
        <dbReference type="ChEBI" id="CHEBI:15378"/>
        <dbReference type="ChEBI" id="CHEBI:43474"/>
        <dbReference type="ChEBI" id="CHEBI:57783"/>
        <dbReference type="ChEBI" id="CHEBI:58066"/>
        <dbReference type="ChEBI" id="CHEBI:58274"/>
        <dbReference type="ChEBI" id="CHEBI:58349"/>
        <dbReference type="EC" id="1.2.1.41"/>
    </reaction>
</comment>
<comment type="pathway">
    <text evidence="1">Amino-acid biosynthesis; L-proline biosynthesis; L-glutamate 5-semialdehyde from L-glutamate: step 2/2.</text>
</comment>
<comment type="subcellular location">
    <subcellularLocation>
        <location evidence="1">Cytoplasm</location>
    </subcellularLocation>
</comment>
<comment type="similarity">
    <text evidence="1">Belongs to the gamma-glutamyl phosphate reductase family.</text>
</comment>
<proteinExistence type="inferred from homology"/>
<organism>
    <name type="scientific">Streptococcus pyogenes serotype M3 (strain ATCC BAA-595 / MGAS315)</name>
    <dbReference type="NCBI Taxonomy" id="198466"/>
    <lineage>
        <taxon>Bacteria</taxon>
        <taxon>Bacillati</taxon>
        <taxon>Bacillota</taxon>
        <taxon>Bacilli</taxon>
        <taxon>Lactobacillales</taxon>
        <taxon>Streptococcaceae</taxon>
        <taxon>Streptococcus</taxon>
    </lineage>
</organism>
<gene>
    <name evidence="1" type="primary">proA</name>
    <name type="ordered locus">SpyM3_1406</name>
</gene>
<feature type="chain" id="PRO_0000189791" description="Gamma-glutamyl phosphate reductase">
    <location>
        <begin position="1"/>
        <end position="416"/>
    </location>
</feature>
<reference key="1">
    <citation type="journal article" date="2002" name="Proc. Natl. Acad. Sci. U.S.A.">
        <title>Genome sequence of a serotype M3 strain of group A Streptococcus: phage-encoded toxins, the high-virulence phenotype, and clone emergence.</title>
        <authorList>
            <person name="Beres S.B."/>
            <person name="Sylva G.L."/>
            <person name="Barbian K.D."/>
            <person name="Lei B."/>
            <person name="Hoff J.S."/>
            <person name="Mammarella N.D."/>
            <person name="Liu M.-Y."/>
            <person name="Smoot J.C."/>
            <person name="Porcella S.F."/>
            <person name="Parkins L.D."/>
            <person name="Campbell D.S."/>
            <person name="Smith T.M."/>
            <person name="McCormick J.K."/>
            <person name="Leung D.Y.M."/>
            <person name="Schlievert P.M."/>
            <person name="Musser J.M."/>
        </authorList>
    </citation>
    <scope>NUCLEOTIDE SEQUENCE [LARGE SCALE GENOMIC DNA]</scope>
    <source>
        <strain>ATCC BAA-595 / MGAS315</strain>
    </source>
</reference>
<name>PROA_STRP3</name>
<protein>
    <recommendedName>
        <fullName evidence="1">Gamma-glutamyl phosphate reductase</fullName>
        <shortName evidence="1">GPR</shortName>
        <ecNumber evidence="1">1.2.1.41</ecNumber>
    </recommendedName>
    <alternativeName>
        <fullName evidence="1">Glutamate-5-semialdehyde dehydrogenase</fullName>
    </alternativeName>
    <alternativeName>
        <fullName evidence="1">Glutamyl-gamma-semialdehyde dehydrogenase</fullName>
        <shortName evidence="1">GSA dehydrogenase</shortName>
    </alternativeName>
</protein>
<sequence length="416" mass="45418">MTDMRRLGQRAKQASLLIAPLSTQIKNRFLSTLAKALVDDTQTLLAANQKDLANAKEHGISDIMMDRLRLTSERIKAIAQGVQQVADLADPIGQVIKGYTNLDGLKILQKRVPLGVIAMIFESRPNVSVDAFSLAFKTNNAIILRGGKDALYSNKALVKLIRQSLEESGITPDAVQLVEDPSHAVAEELMQATDYVDVLIPRGGAKLIQTVKEKAKVPVIETGVGNVHIYVDAQADLDMATKIVINAKTKRPSVCNAAEGLVIHEAVAARFIPMLEKAINQVQPVEWRADDKALPLFEQAVPAKAEDFETEFLDYIMSVKVVSSLEEAISWINQHTSHHSEAIITRDTKAAETFQDLVDAAAVYVNASTRFTDGFVFGLGAEIGISTQKIHARGPMGLEALTSTKFYINGDGHIRE</sequence>
<accession>P0DD20</accession>
<accession>Q8K6C2</accession>
<keyword id="KW-0028">Amino-acid biosynthesis</keyword>
<keyword id="KW-0963">Cytoplasm</keyword>
<keyword id="KW-0521">NADP</keyword>
<keyword id="KW-0560">Oxidoreductase</keyword>
<keyword id="KW-0641">Proline biosynthesis</keyword>
<dbReference type="EC" id="1.2.1.41" evidence="1"/>
<dbReference type="EMBL" id="AE014074">
    <property type="protein sequence ID" value="AAM80013.1"/>
    <property type="molecule type" value="Genomic_DNA"/>
</dbReference>
<dbReference type="RefSeq" id="WP_011054854.1">
    <property type="nucleotide sequence ID" value="NC_004070.1"/>
</dbReference>
<dbReference type="SMR" id="P0DD20"/>
<dbReference type="KEGG" id="spg:SpyM3_1406"/>
<dbReference type="HOGENOM" id="CLU_030231_0_0_9"/>
<dbReference type="UniPathway" id="UPA00098">
    <property type="reaction ID" value="UER00360"/>
</dbReference>
<dbReference type="Proteomes" id="UP000000564">
    <property type="component" value="Chromosome"/>
</dbReference>
<dbReference type="GO" id="GO:0005737">
    <property type="term" value="C:cytoplasm"/>
    <property type="evidence" value="ECO:0007669"/>
    <property type="project" value="UniProtKB-SubCell"/>
</dbReference>
<dbReference type="GO" id="GO:0004350">
    <property type="term" value="F:glutamate-5-semialdehyde dehydrogenase activity"/>
    <property type="evidence" value="ECO:0007669"/>
    <property type="project" value="UniProtKB-UniRule"/>
</dbReference>
<dbReference type="GO" id="GO:0050661">
    <property type="term" value="F:NADP binding"/>
    <property type="evidence" value="ECO:0007669"/>
    <property type="project" value="InterPro"/>
</dbReference>
<dbReference type="GO" id="GO:0055129">
    <property type="term" value="P:L-proline biosynthetic process"/>
    <property type="evidence" value="ECO:0007669"/>
    <property type="project" value="UniProtKB-UniRule"/>
</dbReference>
<dbReference type="CDD" id="cd07079">
    <property type="entry name" value="ALDH_F18-19_ProA-GPR"/>
    <property type="match status" value="1"/>
</dbReference>
<dbReference type="FunFam" id="3.40.309.10:FF:000006">
    <property type="entry name" value="Gamma-glutamyl phosphate reductase"/>
    <property type="match status" value="1"/>
</dbReference>
<dbReference type="Gene3D" id="3.40.605.10">
    <property type="entry name" value="Aldehyde Dehydrogenase, Chain A, domain 1"/>
    <property type="match status" value="1"/>
</dbReference>
<dbReference type="Gene3D" id="3.40.309.10">
    <property type="entry name" value="Aldehyde Dehydrogenase, Chain A, domain 2"/>
    <property type="match status" value="1"/>
</dbReference>
<dbReference type="HAMAP" id="MF_00412">
    <property type="entry name" value="ProA"/>
    <property type="match status" value="1"/>
</dbReference>
<dbReference type="InterPro" id="IPR016161">
    <property type="entry name" value="Ald_DH/histidinol_DH"/>
</dbReference>
<dbReference type="InterPro" id="IPR016163">
    <property type="entry name" value="Ald_DH_C"/>
</dbReference>
<dbReference type="InterPro" id="IPR016162">
    <property type="entry name" value="Ald_DH_N"/>
</dbReference>
<dbReference type="InterPro" id="IPR015590">
    <property type="entry name" value="Aldehyde_DH_dom"/>
</dbReference>
<dbReference type="InterPro" id="IPR020593">
    <property type="entry name" value="G-glutamylP_reductase_CS"/>
</dbReference>
<dbReference type="InterPro" id="IPR012134">
    <property type="entry name" value="Glu-5-SA_DH"/>
</dbReference>
<dbReference type="InterPro" id="IPR000965">
    <property type="entry name" value="GPR_dom"/>
</dbReference>
<dbReference type="NCBIfam" id="NF001221">
    <property type="entry name" value="PRK00197.1"/>
    <property type="match status" value="1"/>
</dbReference>
<dbReference type="NCBIfam" id="TIGR00407">
    <property type="entry name" value="proA"/>
    <property type="match status" value="1"/>
</dbReference>
<dbReference type="PANTHER" id="PTHR11063:SF8">
    <property type="entry name" value="DELTA-1-PYRROLINE-5-CARBOXYLATE SYNTHASE"/>
    <property type="match status" value="1"/>
</dbReference>
<dbReference type="PANTHER" id="PTHR11063">
    <property type="entry name" value="GLUTAMATE SEMIALDEHYDE DEHYDROGENASE"/>
    <property type="match status" value="1"/>
</dbReference>
<dbReference type="Pfam" id="PF00171">
    <property type="entry name" value="Aldedh"/>
    <property type="match status" value="2"/>
</dbReference>
<dbReference type="PIRSF" id="PIRSF000151">
    <property type="entry name" value="GPR"/>
    <property type="match status" value="1"/>
</dbReference>
<dbReference type="SUPFAM" id="SSF53720">
    <property type="entry name" value="ALDH-like"/>
    <property type="match status" value="1"/>
</dbReference>
<dbReference type="PROSITE" id="PS01223">
    <property type="entry name" value="PROA"/>
    <property type="match status" value="1"/>
</dbReference>